<accession>P59124</accession>
<protein>
    <recommendedName>
        <fullName evidence="1">Small ribosomal subunit protein uS5</fullName>
    </recommendedName>
    <alternativeName>
        <fullName evidence="2">30S ribosomal protein S5</fullName>
    </alternativeName>
</protein>
<gene>
    <name evidence="1" type="primary">rpsE</name>
    <name type="ordered locus">SO_0248</name>
</gene>
<dbReference type="EMBL" id="AE014299">
    <property type="protein sequence ID" value="AAN53333.1"/>
    <property type="molecule type" value="Genomic_DNA"/>
</dbReference>
<dbReference type="RefSeq" id="NP_715888.1">
    <property type="nucleotide sequence ID" value="NC_004347.2"/>
</dbReference>
<dbReference type="RefSeq" id="WP_007644438.1">
    <property type="nucleotide sequence ID" value="NZ_CP053946.1"/>
</dbReference>
<dbReference type="SMR" id="P59124"/>
<dbReference type="STRING" id="211586.SO_0248"/>
<dbReference type="PaxDb" id="211586-SO_0248"/>
<dbReference type="GeneID" id="94726203"/>
<dbReference type="KEGG" id="son:SO_0248"/>
<dbReference type="PATRIC" id="fig|211586.12.peg.236"/>
<dbReference type="eggNOG" id="COG0098">
    <property type="taxonomic scope" value="Bacteria"/>
</dbReference>
<dbReference type="HOGENOM" id="CLU_065898_2_2_6"/>
<dbReference type="OrthoDB" id="9809045at2"/>
<dbReference type="PhylomeDB" id="P59124"/>
<dbReference type="BioCyc" id="SONE211586:G1GMP-237-MONOMER"/>
<dbReference type="Proteomes" id="UP000008186">
    <property type="component" value="Chromosome"/>
</dbReference>
<dbReference type="GO" id="GO:0022627">
    <property type="term" value="C:cytosolic small ribosomal subunit"/>
    <property type="evidence" value="ECO:0000318"/>
    <property type="project" value="GO_Central"/>
</dbReference>
<dbReference type="GO" id="GO:0019843">
    <property type="term" value="F:rRNA binding"/>
    <property type="evidence" value="ECO:0007669"/>
    <property type="project" value="UniProtKB-UniRule"/>
</dbReference>
<dbReference type="GO" id="GO:0003735">
    <property type="term" value="F:structural constituent of ribosome"/>
    <property type="evidence" value="ECO:0000318"/>
    <property type="project" value="GO_Central"/>
</dbReference>
<dbReference type="GO" id="GO:0006412">
    <property type="term" value="P:translation"/>
    <property type="evidence" value="ECO:0000318"/>
    <property type="project" value="GO_Central"/>
</dbReference>
<dbReference type="FunFam" id="3.30.160.20:FF:000001">
    <property type="entry name" value="30S ribosomal protein S5"/>
    <property type="match status" value="1"/>
</dbReference>
<dbReference type="FunFam" id="3.30.230.10:FF:000002">
    <property type="entry name" value="30S ribosomal protein S5"/>
    <property type="match status" value="1"/>
</dbReference>
<dbReference type="Gene3D" id="3.30.160.20">
    <property type="match status" value="1"/>
</dbReference>
<dbReference type="Gene3D" id="3.30.230.10">
    <property type="match status" value="1"/>
</dbReference>
<dbReference type="HAMAP" id="MF_01307_B">
    <property type="entry name" value="Ribosomal_uS5_B"/>
    <property type="match status" value="1"/>
</dbReference>
<dbReference type="InterPro" id="IPR020568">
    <property type="entry name" value="Ribosomal_Su5_D2-typ_SF"/>
</dbReference>
<dbReference type="InterPro" id="IPR000851">
    <property type="entry name" value="Ribosomal_uS5"/>
</dbReference>
<dbReference type="InterPro" id="IPR005712">
    <property type="entry name" value="Ribosomal_uS5_bac-type"/>
</dbReference>
<dbReference type="InterPro" id="IPR005324">
    <property type="entry name" value="Ribosomal_uS5_C"/>
</dbReference>
<dbReference type="InterPro" id="IPR013810">
    <property type="entry name" value="Ribosomal_uS5_N"/>
</dbReference>
<dbReference type="InterPro" id="IPR018192">
    <property type="entry name" value="Ribosomal_uS5_N_CS"/>
</dbReference>
<dbReference type="InterPro" id="IPR014721">
    <property type="entry name" value="Ribsml_uS5_D2-typ_fold_subgr"/>
</dbReference>
<dbReference type="NCBIfam" id="TIGR01021">
    <property type="entry name" value="rpsE_bact"/>
    <property type="match status" value="1"/>
</dbReference>
<dbReference type="PANTHER" id="PTHR48277">
    <property type="entry name" value="MITOCHONDRIAL RIBOSOMAL PROTEIN S5"/>
    <property type="match status" value="1"/>
</dbReference>
<dbReference type="PANTHER" id="PTHR48277:SF1">
    <property type="entry name" value="MITOCHONDRIAL RIBOSOMAL PROTEIN S5"/>
    <property type="match status" value="1"/>
</dbReference>
<dbReference type="Pfam" id="PF00333">
    <property type="entry name" value="Ribosomal_S5"/>
    <property type="match status" value="1"/>
</dbReference>
<dbReference type="Pfam" id="PF03719">
    <property type="entry name" value="Ribosomal_S5_C"/>
    <property type="match status" value="1"/>
</dbReference>
<dbReference type="SUPFAM" id="SSF54768">
    <property type="entry name" value="dsRNA-binding domain-like"/>
    <property type="match status" value="1"/>
</dbReference>
<dbReference type="SUPFAM" id="SSF54211">
    <property type="entry name" value="Ribosomal protein S5 domain 2-like"/>
    <property type="match status" value="1"/>
</dbReference>
<dbReference type="PROSITE" id="PS00585">
    <property type="entry name" value="RIBOSOMAL_S5"/>
    <property type="match status" value="1"/>
</dbReference>
<dbReference type="PROSITE" id="PS50881">
    <property type="entry name" value="S5_DSRBD"/>
    <property type="match status" value="1"/>
</dbReference>
<reference key="1">
    <citation type="journal article" date="2002" name="Nat. Biotechnol.">
        <title>Genome sequence of the dissimilatory metal ion-reducing bacterium Shewanella oneidensis.</title>
        <authorList>
            <person name="Heidelberg J.F."/>
            <person name="Paulsen I.T."/>
            <person name="Nelson K.E."/>
            <person name="Gaidos E.J."/>
            <person name="Nelson W.C."/>
            <person name="Read T.D."/>
            <person name="Eisen J.A."/>
            <person name="Seshadri R."/>
            <person name="Ward N.L."/>
            <person name="Methe B.A."/>
            <person name="Clayton R.A."/>
            <person name="Meyer T."/>
            <person name="Tsapin A."/>
            <person name="Scott J."/>
            <person name="Beanan M.J."/>
            <person name="Brinkac L.M."/>
            <person name="Daugherty S.C."/>
            <person name="DeBoy R.T."/>
            <person name="Dodson R.J."/>
            <person name="Durkin A.S."/>
            <person name="Haft D.H."/>
            <person name="Kolonay J.F."/>
            <person name="Madupu R."/>
            <person name="Peterson J.D."/>
            <person name="Umayam L.A."/>
            <person name="White O."/>
            <person name="Wolf A.M."/>
            <person name="Vamathevan J.J."/>
            <person name="Weidman J.F."/>
            <person name="Impraim M."/>
            <person name="Lee K."/>
            <person name="Berry K.J."/>
            <person name="Lee C."/>
            <person name="Mueller J."/>
            <person name="Khouri H.M."/>
            <person name="Gill J."/>
            <person name="Utterback T.R."/>
            <person name="McDonald L.A."/>
            <person name="Feldblyum T.V."/>
            <person name="Smith H.O."/>
            <person name="Venter J.C."/>
            <person name="Nealson K.H."/>
            <person name="Fraser C.M."/>
        </authorList>
    </citation>
    <scope>NUCLEOTIDE SEQUENCE [LARGE SCALE GENOMIC DNA]</scope>
    <source>
        <strain>ATCC 700550 / JCM 31522 / CIP 106686 / LMG 19005 / NCIMB 14063 / MR-1</strain>
    </source>
</reference>
<organism>
    <name type="scientific">Shewanella oneidensis (strain ATCC 700550 / JCM 31522 / CIP 106686 / LMG 19005 / NCIMB 14063 / MR-1)</name>
    <dbReference type="NCBI Taxonomy" id="211586"/>
    <lineage>
        <taxon>Bacteria</taxon>
        <taxon>Pseudomonadati</taxon>
        <taxon>Pseudomonadota</taxon>
        <taxon>Gammaproteobacteria</taxon>
        <taxon>Alteromonadales</taxon>
        <taxon>Shewanellaceae</taxon>
        <taxon>Shewanella</taxon>
    </lineage>
</organism>
<comment type="function">
    <text evidence="1">With S4 and S12 plays an important role in translational accuracy.</text>
</comment>
<comment type="function">
    <text evidence="1">Located at the back of the 30S subunit body where it stabilizes the conformation of the head with respect to the body.</text>
</comment>
<comment type="subunit">
    <text evidence="1">Part of the 30S ribosomal subunit. Contacts proteins S4 and S8.</text>
</comment>
<comment type="domain">
    <text>The N-terminal domain interacts with the head of the 30S subunit; the C-terminal domain interacts with the body and contacts protein S4. The interaction surface between S4 and S5 is involved in control of translational fidelity.</text>
</comment>
<comment type="similarity">
    <text evidence="1">Belongs to the universal ribosomal protein uS5 family.</text>
</comment>
<name>RS5_SHEON</name>
<evidence type="ECO:0000255" key="1">
    <source>
        <dbReference type="HAMAP-Rule" id="MF_01307"/>
    </source>
</evidence>
<evidence type="ECO:0000305" key="2"/>
<keyword id="KW-1185">Reference proteome</keyword>
<keyword id="KW-0687">Ribonucleoprotein</keyword>
<keyword id="KW-0689">Ribosomal protein</keyword>
<keyword id="KW-0694">RNA-binding</keyword>
<keyword id="KW-0699">rRNA-binding</keyword>
<proteinExistence type="inferred from homology"/>
<feature type="chain" id="PRO_0000131590" description="Small ribosomal subunit protein uS5">
    <location>
        <begin position="1"/>
        <end position="167"/>
    </location>
</feature>
<feature type="domain" description="S5 DRBM" evidence="1">
    <location>
        <begin position="12"/>
        <end position="75"/>
    </location>
</feature>
<sequence length="167" mass="17741">MAKLEAQQKDDLQEKLIAVNRVSKVVKGGRIFSFTALTVVGDGNGKVGYGYGKAREVPAAIQKAMEKARRNMVTVELNAGTLHHPVKGRHTGSRVYMQPASQGTGIIAGGAMRAVLEVAGVHNVLSKAYGSTNPINIVRATVDALVHMKSPSQIAAKRGLNVDEIRG</sequence>